<feature type="chain" id="PRO_0000318634" description="Type I iodothyronine deiodinase">
    <location>
        <begin position="1"/>
        <end position="248"/>
    </location>
</feature>
<feature type="transmembrane region" description="Helical" evidence="2">
    <location>
        <begin position="7"/>
        <end position="29"/>
    </location>
</feature>
<feature type="active site">
    <location>
        <position position="126"/>
    </location>
</feature>
<feature type="non-standard amino acid" description="Selenocysteine">
    <location>
        <position position="126"/>
    </location>
</feature>
<dbReference type="EC" id="1.21.99.4"/>
<dbReference type="EMBL" id="AY184803">
    <property type="protein sequence ID" value="AAO31952.1"/>
    <property type="molecule type" value="mRNA"/>
</dbReference>
<dbReference type="RefSeq" id="NP_001296924.1">
    <property type="nucleotide sequence ID" value="NM_001309995.1"/>
</dbReference>
<dbReference type="STRING" id="8078.ENSFHEP00000000892"/>
<dbReference type="GeneID" id="105927890"/>
<dbReference type="CTD" id="1733"/>
<dbReference type="OrthoDB" id="428577at2759"/>
<dbReference type="Proteomes" id="UP000265000">
    <property type="component" value="Whole Genome Shotgun Assembly"/>
</dbReference>
<dbReference type="GO" id="GO:0005789">
    <property type="term" value="C:endoplasmic reticulum membrane"/>
    <property type="evidence" value="ECO:0007669"/>
    <property type="project" value="UniProtKB-SubCell"/>
</dbReference>
<dbReference type="GO" id="GO:0004800">
    <property type="term" value="F:thyroxine 5'-deiodinase activity"/>
    <property type="evidence" value="ECO:0007669"/>
    <property type="project" value="UniProtKB-EC"/>
</dbReference>
<dbReference type="GO" id="GO:0042446">
    <property type="term" value="P:hormone biosynthetic process"/>
    <property type="evidence" value="ECO:0007669"/>
    <property type="project" value="UniProtKB-KW"/>
</dbReference>
<dbReference type="GO" id="GO:0042403">
    <property type="term" value="P:thyroid hormone metabolic process"/>
    <property type="evidence" value="ECO:0007669"/>
    <property type="project" value="TreeGrafter"/>
</dbReference>
<dbReference type="FunFam" id="3.40.30.10:FF:000192">
    <property type="entry name" value="Iodothyronine deiodinase"/>
    <property type="match status" value="1"/>
</dbReference>
<dbReference type="Gene3D" id="3.40.30.10">
    <property type="entry name" value="Glutaredoxin"/>
    <property type="match status" value="1"/>
</dbReference>
<dbReference type="InterPro" id="IPR000643">
    <property type="entry name" value="Iodothyronine_deiodinase"/>
</dbReference>
<dbReference type="InterPro" id="IPR008261">
    <property type="entry name" value="Iodothyronine_deiodinase_AS"/>
</dbReference>
<dbReference type="InterPro" id="IPR027252">
    <property type="entry name" value="Iodothyronine_deiodinase_I/III"/>
</dbReference>
<dbReference type="InterPro" id="IPR036249">
    <property type="entry name" value="Thioredoxin-like_sf"/>
</dbReference>
<dbReference type="PANTHER" id="PTHR11781">
    <property type="entry name" value="IODOTHYRONINE DEIODINASE"/>
    <property type="match status" value="1"/>
</dbReference>
<dbReference type="PANTHER" id="PTHR11781:SF22">
    <property type="entry name" value="TYPE I IODOTHYRONINE DEIODINASE"/>
    <property type="match status" value="1"/>
</dbReference>
<dbReference type="Pfam" id="PF00837">
    <property type="entry name" value="T4_deiodinase"/>
    <property type="match status" value="1"/>
</dbReference>
<dbReference type="PIRSF" id="PIRSF001330">
    <property type="entry name" value="IOD"/>
    <property type="match status" value="1"/>
</dbReference>
<dbReference type="PIRSF" id="PIRSF500144">
    <property type="entry name" value="IODI_III"/>
    <property type="match status" value="1"/>
</dbReference>
<dbReference type="SUPFAM" id="SSF52833">
    <property type="entry name" value="Thioredoxin-like"/>
    <property type="match status" value="1"/>
</dbReference>
<dbReference type="PROSITE" id="PS01205">
    <property type="entry name" value="T4_DEIODINASE"/>
    <property type="match status" value="1"/>
</dbReference>
<keyword id="KW-0256">Endoplasmic reticulum</keyword>
<keyword id="KW-0472">Membrane</keyword>
<keyword id="KW-0560">Oxidoreductase</keyword>
<keyword id="KW-0712">Selenocysteine</keyword>
<keyword id="KW-0893">Thyroid hormones biosynthesis</keyword>
<keyword id="KW-0812">Transmembrane</keyword>
<keyword id="KW-1133">Transmembrane helix</keyword>
<comment type="function">
    <text evidence="4">Responsible for the deiodination of T4 (3,5,3',5'-tetraiodothyronine) into T3 (3,5,3'-triiodothyronine) and of T3 into T2 (3,3'-diiodothyronine).</text>
</comment>
<comment type="catalytic activity">
    <reaction evidence="3">
        <text>3,3',5-triiodo-L-thyronine + iodide + A + H(+) = L-thyroxine + AH2</text>
        <dbReference type="Rhea" id="RHEA:19745"/>
        <dbReference type="ChEBI" id="CHEBI:13193"/>
        <dbReference type="ChEBI" id="CHEBI:15378"/>
        <dbReference type="ChEBI" id="CHEBI:16382"/>
        <dbReference type="ChEBI" id="CHEBI:17499"/>
        <dbReference type="ChEBI" id="CHEBI:58448"/>
        <dbReference type="ChEBI" id="CHEBI:533015"/>
        <dbReference type="EC" id="1.21.99.4"/>
    </reaction>
</comment>
<comment type="subcellular location">
    <subcellularLocation>
        <location evidence="1">Endoplasmic reticulum membrane</location>
        <topology evidence="1">Single-pass membrane protein</topology>
    </subcellularLocation>
</comment>
<comment type="tissue specificity">
    <text evidence="4">Expressed in liver.</text>
</comment>
<comment type="similarity">
    <text evidence="5">Belongs to the iodothyronine deiodinase family.</text>
</comment>
<organism>
    <name type="scientific">Fundulus heteroclitus</name>
    <name type="common">Killifish</name>
    <name type="synonym">Mummichog</name>
    <dbReference type="NCBI Taxonomy" id="8078"/>
    <lineage>
        <taxon>Eukaryota</taxon>
        <taxon>Metazoa</taxon>
        <taxon>Chordata</taxon>
        <taxon>Craniata</taxon>
        <taxon>Vertebrata</taxon>
        <taxon>Euteleostomi</taxon>
        <taxon>Actinopterygii</taxon>
        <taxon>Neopterygii</taxon>
        <taxon>Teleostei</taxon>
        <taxon>Neoteleostei</taxon>
        <taxon>Acanthomorphata</taxon>
        <taxon>Ovalentaria</taxon>
        <taxon>Atherinomorphae</taxon>
        <taxon>Cyprinodontiformes</taxon>
        <taxon>Fundulidae</taxon>
        <taxon>Fundulus</taxon>
    </lineage>
</organism>
<reference key="1">
    <citation type="journal article" date="2003" name="Gen. Comp. Endocrinol.">
        <title>The liver of Fundulus heteroclitus expresses deiodinase type 1 mRNA.</title>
        <authorList>
            <person name="Orozco A."/>
            <person name="Villalobos P."/>
            <person name="Jeziorski M.C."/>
            <person name="Valverde-R C."/>
        </authorList>
    </citation>
    <scope>NUCLEOTIDE SEQUENCE [MRNA]</scope>
    <scope>FUNCTION</scope>
    <scope>TISSUE SPECIFICITY</scope>
    <source>
        <tissue>Liver</tissue>
    </source>
</reference>
<sequence length="248" mass="27849">MFLQKLLVYLTAACMFCYILVLSATLNVLKVLSPNLARKLILKMGEKVTMTQNPKFSYEDWGLTYGSLAFIKVASQTMWLSLGQEAFVGEDAPDSPVVTVDGERTSICNYLKGNRPLVLSFGSCTUPPFMFKLGEFKQLVRDFVDVADFLVVYVAEAHSTDGWSFGNNFDIRQHRSLEDRLSAARILVQNDPLCPVVVDEMSNVSAIKYAAQPERLYVLQAGKVLYKGAMGPWGYNPQEVRSVLQKMR</sequence>
<proteinExistence type="evidence at transcript level"/>
<evidence type="ECO:0000250" key="1"/>
<evidence type="ECO:0000255" key="2"/>
<evidence type="ECO:0000255" key="3">
    <source>
        <dbReference type="PROSITE-ProRule" id="PRU10107"/>
    </source>
</evidence>
<evidence type="ECO:0000269" key="4">
    <source>
    </source>
</evidence>
<evidence type="ECO:0000305" key="5"/>
<protein>
    <recommendedName>
        <fullName>Type I iodothyronine deiodinase</fullName>
        <ecNumber>1.21.99.4</ecNumber>
    </recommendedName>
    <alternativeName>
        <fullName>5DI</fullName>
    </alternativeName>
    <alternativeName>
        <fullName>DIOI</fullName>
    </alternativeName>
    <alternativeName>
        <fullName>Type 1 DI</fullName>
    </alternativeName>
    <alternativeName>
        <fullName>Type-I 5'-deiodinase</fullName>
    </alternativeName>
</protein>
<gene>
    <name type="primary">dio1</name>
</gene>
<name>IOD1_FUNHE</name>
<accession>Q804E1</accession>